<sequence>MTTLRKLPIALAVAAGVLSTQAMAVDFHGYARSGIGWTGSGGEQQCFKTTGAQSKYRLGNECETYAELKLGQELWKEGDKSFYLDTNVAYSVSQRDDWESTDPAFREANVQGKNLIESLPGSTMWAGKRFYQRHDVHMIDFYYWDISGPGAGLEAIDLGFGKLSVAATRNSEAGGSSAWINNQRKDADKTINDVYDIRLAGLETNPGGSLEFGVDYGRANTQDDYSLAPNASKDGVLLTAEHTQSMMGGFNKFVVQYATDSMTSWNSGHSQGTSVNNNGHMLRVIDHGAINLAEKWDMMYVALYQDTDWDNNNGTTWYSVGVRPMYKWTPIMSTLLEAGYDNVKSQRTGDRNGQYKLTLAQQWQAGDSIWSRPAIRVFATYANWDEKWGYNNVDKSPDNGLAQNGTIGTDSRGKSNEVTFGAQFEAWW</sequence>
<keyword id="KW-0998">Cell outer membrane</keyword>
<keyword id="KW-0406">Ion transport</keyword>
<keyword id="KW-0472">Membrane</keyword>
<keyword id="KW-0626">Porin</keyword>
<keyword id="KW-0732">Signal</keyword>
<keyword id="KW-0762">Sugar transport</keyword>
<keyword id="KW-0812">Transmembrane</keyword>
<keyword id="KW-1134">Transmembrane beta strand</keyword>
<keyword id="KW-0813">Transport</keyword>
<gene>
    <name evidence="1" type="primary">lamB</name>
    <name type="ordered locus">YE3862</name>
</gene>
<dbReference type="EMBL" id="AM286415">
    <property type="protein sequence ID" value="CAL13884.1"/>
    <property type="molecule type" value="Genomic_DNA"/>
</dbReference>
<dbReference type="RefSeq" id="WP_005174568.1">
    <property type="nucleotide sequence ID" value="NC_008800.1"/>
</dbReference>
<dbReference type="RefSeq" id="YP_001008010.1">
    <property type="nucleotide sequence ID" value="NC_008800.1"/>
</dbReference>
<dbReference type="SMR" id="A1JRU8"/>
<dbReference type="KEGG" id="yen:YE3862"/>
<dbReference type="PATRIC" id="fig|393305.7.peg.4114"/>
<dbReference type="eggNOG" id="COG4580">
    <property type="taxonomic scope" value="Bacteria"/>
</dbReference>
<dbReference type="HOGENOM" id="CLU_032473_4_1_6"/>
<dbReference type="OrthoDB" id="106611at2"/>
<dbReference type="Proteomes" id="UP000000642">
    <property type="component" value="Chromosome"/>
</dbReference>
<dbReference type="GO" id="GO:0009279">
    <property type="term" value="C:cell outer membrane"/>
    <property type="evidence" value="ECO:0007669"/>
    <property type="project" value="UniProtKB-SubCell"/>
</dbReference>
<dbReference type="GO" id="GO:0046930">
    <property type="term" value="C:pore complex"/>
    <property type="evidence" value="ECO:0007669"/>
    <property type="project" value="UniProtKB-KW"/>
</dbReference>
<dbReference type="GO" id="GO:0042958">
    <property type="term" value="F:maltodextrin transmembrane transporter activity"/>
    <property type="evidence" value="ECO:0007669"/>
    <property type="project" value="InterPro"/>
</dbReference>
<dbReference type="GO" id="GO:0015481">
    <property type="term" value="F:maltose transporting porin activity"/>
    <property type="evidence" value="ECO:0007669"/>
    <property type="project" value="InterPro"/>
</dbReference>
<dbReference type="GO" id="GO:0006811">
    <property type="term" value="P:monoatomic ion transport"/>
    <property type="evidence" value="ECO:0007669"/>
    <property type="project" value="UniProtKB-KW"/>
</dbReference>
<dbReference type="CDD" id="cd01346">
    <property type="entry name" value="Maltoporin-like"/>
    <property type="match status" value="1"/>
</dbReference>
<dbReference type="FunFam" id="2.40.170.10:FF:000001">
    <property type="entry name" value="Maltoporin"/>
    <property type="match status" value="1"/>
</dbReference>
<dbReference type="Gene3D" id="2.40.170.10">
    <property type="entry name" value="Porin, LamB type"/>
    <property type="match status" value="1"/>
</dbReference>
<dbReference type="HAMAP" id="MF_01301">
    <property type="entry name" value="LamB"/>
    <property type="match status" value="1"/>
</dbReference>
<dbReference type="InterPro" id="IPR050286">
    <property type="entry name" value="G_neg_Bact_CarbUptk_Porin"/>
</dbReference>
<dbReference type="InterPro" id="IPR023738">
    <property type="entry name" value="Maltoporin"/>
</dbReference>
<dbReference type="InterPro" id="IPR003192">
    <property type="entry name" value="Porin_LamB"/>
</dbReference>
<dbReference type="InterPro" id="IPR036998">
    <property type="entry name" value="Porin_LamB_sf"/>
</dbReference>
<dbReference type="NCBIfam" id="NF006860">
    <property type="entry name" value="PRK09360.1"/>
    <property type="match status" value="1"/>
</dbReference>
<dbReference type="PANTHER" id="PTHR38762">
    <property type="entry name" value="CRYPTIC OUTER MEMBRANE PORIN BGLH-RELATED"/>
    <property type="match status" value="1"/>
</dbReference>
<dbReference type="PANTHER" id="PTHR38762:SF1">
    <property type="entry name" value="CRYPTIC OUTER MEMBRANE PORIN BGLH-RELATED"/>
    <property type="match status" value="1"/>
</dbReference>
<dbReference type="Pfam" id="PF02264">
    <property type="entry name" value="LamB"/>
    <property type="match status" value="1"/>
</dbReference>
<dbReference type="SUPFAM" id="SSF56935">
    <property type="entry name" value="Porins"/>
    <property type="match status" value="1"/>
</dbReference>
<protein>
    <recommendedName>
        <fullName evidence="1">Maltoporin</fullName>
    </recommendedName>
    <alternativeName>
        <fullName evidence="1">Maltose-inducible porin</fullName>
    </alternativeName>
</protein>
<name>LAMB_YERE8</name>
<feature type="signal peptide" evidence="1">
    <location>
        <begin position="1"/>
        <end position="24"/>
    </location>
</feature>
<feature type="chain" id="PRO_5000201403" description="Maltoporin">
    <location>
        <begin position="25"/>
        <end position="428"/>
    </location>
</feature>
<feature type="site" description="Greasy slide, important in sugar transport" evidence="1">
    <location>
        <position position="30"/>
    </location>
</feature>
<feature type="site" description="Greasy slide, important in sugar transport" evidence="1">
    <location>
        <position position="65"/>
    </location>
</feature>
<feature type="site" description="Greasy slide, important in sugar transport" evidence="1">
    <location>
        <position position="98"/>
    </location>
</feature>
<feature type="site" description="Important in sugar transport" evidence="1">
    <location>
        <position position="142"/>
    </location>
</feature>
<feature type="site" description="Greasy slide, important in sugar transport" evidence="1">
    <location>
        <position position="250"/>
    </location>
</feature>
<feature type="site" description="Greasy slide, important in sugar transport" evidence="1">
    <location>
        <position position="370"/>
    </location>
</feature>
<feature type="site" description="Greasy slide, important in sugar transport" evidence="1">
    <location>
        <position position="427"/>
    </location>
</feature>
<comment type="function">
    <text evidence="1">Involved in the transport of maltose and maltodextrins.</text>
</comment>
<comment type="catalytic activity">
    <reaction evidence="1">
        <text>beta-maltose(in) = beta-maltose(out)</text>
        <dbReference type="Rhea" id="RHEA:29731"/>
        <dbReference type="ChEBI" id="CHEBI:18147"/>
    </reaction>
</comment>
<comment type="subunit">
    <text evidence="1">Homotrimer formed of three 18-stranded antiparallel beta-barrels, containing three independent channels.</text>
</comment>
<comment type="subcellular location">
    <subcellularLocation>
        <location evidence="1">Cell outer membrane</location>
        <topology evidence="1">Multi-pass membrane protein</topology>
    </subcellularLocation>
</comment>
<comment type="induction">
    <text evidence="1">By maltose.</text>
</comment>
<comment type="similarity">
    <text evidence="1">Belongs to the porin LamB (TC 1.B.3) family.</text>
</comment>
<accession>A1JRU8</accession>
<proteinExistence type="inferred from homology"/>
<organism>
    <name type="scientific">Yersinia enterocolitica serotype O:8 / biotype 1B (strain NCTC 13174 / 8081)</name>
    <dbReference type="NCBI Taxonomy" id="393305"/>
    <lineage>
        <taxon>Bacteria</taxon>
        <taxon>Pseudomonadati</taxon>
        <taxon>Pseudomonadota</taxon>
        <taxon>Gammaproteobacteria</taxon>
        <taxon>Enterobacterales</taxon>
        <taxon>Yersiniaceae</taxon>
        <taxon>Yersinia</taxon>
    </lineage>
</organism>
<reference key="1">
    <citation type="journal article" date="2006" name="PLoS Genet.">
        <title>The complete genome sequence and comparative genome analysis of the high pathogenicity Yersinia enterocolitica strain 8081.</title>
        <authorList>
            <person name="Thomson N.R."/>
            <person name="Howard S."/>
            <person name="Wren B.W."/>
            <person name="Holden M.T.G."/>
            <person name="Crossman L."/>
            <person name="Challis G.L."/>
            <person name="Churcher C."/>
            <person name="Mungall K."/>
            <person name="Brooks K."/>
            <person name="Chillingworth T."/>
            <person name="Feltwell T."/>
            <person name="Abdellah Z."/>
            <person name="Hauser H."/>
            <person name="Jagels K."/>
            <person name="Maddison M."/>
            <person name="Moule S."/>
            <person name="Sanders M."/>
            <person name="Whitehead S."/>
            <person name="Quail M.A."/>
            <person name="Dougan G."/>
            <person name="Parkhill J."/>
            <person name="Prentice M.B."/>
        </authorList>
    </citation>
    <scope>NUCLEOTIDE SEQUENCE [LARGE SCALE GENOMIC DNA]</scope>
    <source>
        <strain>NCTC 13174 / 8081</strain>
    </source>
</reference>
<evidence type="ECO:0000255" key="1">
    <source>
        <dbReference type="HAMAP-Rule" id="MF_01301"/>
    </source>
</evidence>